<keyword id="KW-0030">Aminoacyl-tRNA synthetase</keyword>
<keyword id="KW-0067">ATP-binding</keyword>
<keyword id="KW-0963">Cytoplasm</keyword>
<keyword id="KW-0436">Ligase</keyword>
<keyword id="KW-0460">Magnesium</keyword>
<keyword id="KW-0479">Metal-binding</keyword>
<keyword id="KW-0547">Nucleotide-binding</keyword>
<keyword id="KW-0648">Protein biosynthesis</keyword>
<keyword id="KW-1185">Reference proteome</keyword>
<sequence>MTENQNPAIDENKLIAERRGKLGKLREKGLAFPNDFRRDSYCADLQARYGDKSKEELEEASVRAKVSGRIMAMRGPFVVIQDMTGRIQLYIDRKGLPPEQLENVKLWDLGDIVAAEGALHKSDKGDLYVNMENPRLMVKALRPLPDKHKGLTNTEMRYRQRYLDLITNEEARETFRIRSKVIESIRYFLTKRDFIEAETPMLQVIPGGATARPFVTYHNALDIEMFLRIAPELYLKRLVVGGFERVFEINRNFRNEGLSTRHNPEFTMIEFYQAFADYKDLMNLTEEMLRWVAQEALGTTEVRNTSKNTDGDVVDEIIYDFGKPFIRMTVVESILHFNPELTLGDIDNMDGAKKVATGLGIPLKASWGLGKIQIEIFEKTVEHRLMQPTFITEYPTEVSPLARRNDDNPFVTDRFEFFVGGREIANGFSELNDPEDQAERFRKQVAEKEAGDDEAMFFDEDYITALEHGMPPTAGEGIGIDRLVMLLTDSPSIRDVILFPHMRPLAD</sequence>
<reference key="1">
    <citation type="journal article" date="2005" name="Nucleic Acids Res.">
        <title>Genomic blueprint of Hahella chejuensis, a marine microbe producing an algicidal agent.</title>
        <authorList>
            <person name="Jeong H."/>
            <person name="Yim J.H."/>
            <person name="Lee C."/>
            <person name="Choi S.-H."/>
            <person name="Park Y.K."/>
            <person name="Yoon S.H."/>
            <person name="Hur C.-G."/>
            <person name="Kang H.-Y."/>
            <person name="Kim D."/>
            <person name="Lee H.H."/>
            <person name="Park K.H."/>
            <person name="Park S.-H."/>
            <person name="Park H.-S."/>
            <person name="Lee H.K."/>
            <person name="Oh T.K."/>
            <person name="Kim J.F."/>
        </authorList>
    </citation>
    <scope>NUCLEOTIDE SEQUENCE [LARGE SCALE GENOMIC DNA]</scope>
    <source>
        <strain>KCTC 2396</strain>
    </source>
</reference>
<accession>Q2SL47</accession>
<organism>
    <name type="scientific">Hahella chejuensis (strain KCTC 2396)</name>
    <dbReference type="NCBI Taxonomy" id="349521"/>
    <lineage>
        <taxon>Bacteria</taxon>
        <taxon>Pseudomonadati</taxon>
        <taxon>Pseudomonadota</taxon>
        <taxon>Gammaproteobacteria</taxon>
        <taxon>Oceanospirillales</taxon>
        <taxon>Hahellaceae</taxon>
        <taxon>Hahella</taxon>
    </lineage>
</organism>
<name>SYK_HAHCH</name>
<proteinExistence type="inferred from homology"/>
<gene>
    <name evidence="1" type="primary">lysS</name>
    <name type="ordered locus">HCH_01783</name>
</gene>
<protein>
    <recommendedName>
        <fullName evidence="1">Lysine--tRNA ligase</fullName>
        <ecNumber evidence="1">6.1.1.6</ecNumber>
    </recommendedName>
    <alternativeName>
        <fullName evidence="1">Lysyl-tRNA synthetase</fullName>
        <shortName evidence="1">LysRS</shortName>
    </alternativeName>
</protein>
<evidence type="ECO:0000255" key="1">
    <source>
        <dbReference type="HAMAP-Rule" id="MF_00252"/>
    </source>
</evidence>
<dbReference type="EC" id="6.1.1.6" evidence="1"/>
<dbReference type="EMBL" id="CP000155">
    <property type="protein sequence ID" value="ABC28627.1"/>
    <property type="molecule type" value="Genomic_DNA"/>
</dbReference>
<dbReference type="RefSeq" id="WP_011395699.1">
    <property type="nucleotide sequence ID" value="NC_007645.1"/>
</dbReference>
<dbReference type="SMR" id="Q2SL47"/>
<dbReference type="STRING" id="349521.HCH_01783"/>
<dbReference type="KEGG" id="hch:HCH_01783"/>
<dbReference type="eggNOG" id="COG1190">
    <property type="taxonomic scope" value="Bacteria"/>
</dbReference>
<dbReference type="HOGENOM" id="CLU_008255_6_0_6"/>
<dbReference type="OrthoDB" id="9802326at2"/>
<dbReference type="Proteomes" id="UP000000238">
    <property type="component" value="Chromosome"/>
</dbReference>
<dbReference type="GO" id="GO:0005829">
    <property type="term" value="C:cytosol"/>
    <property type="evidence" value="ECO:0007669"/>
    <property type="project" value="TreeGrafter"/>
</dbReference>
<dbReference type="GO" id="GO:0005524">
    <property type="term" value="F:ATP binding"/>
    <property type="evidence" value="ECO:0007669"/>
    <property type="project" value="UniProtKB-UniRule"/>
</dbReference>
<dbReference type="GO" id="GO:0004824">
    <property type="term" value="F:lysine-tRNA ligase activity"/>
    <property type="evidence" value="ECO:0007669"/>
    <property type="project" value="UniProtKB-UniRule"/>
</dbReference>
<dbReference type="GO" id="GO:0000287">
    <property type="term" value="F:magnesium ion binding"/>
    <property type="evidence" value="ECO:0007669"/>
    <property type="project" value="UniProtKB-UniRule"/>
</dbReference>
<dbReference type="GO" id="GO:0000049">
    <property type="term" value="F:tRNA binding"/>
    <property type="evidence" value="ECO:0007669"/>
    <property type="project" value="TreeGrafter"/>
</dbReference>
<dbReference type="GO" id="GO:0006430">
    <property type="term" value="P:lysyl-tRNA aminoacylation"/>
    <property type="evidence" value="ECO:0007669"/>
    <property type="project" value="UniProtKB-UniRule"/>
</dbReference>
<dbReference type="CDD" id="cd00775">
    <property type="entry name" value="LysRS_core"/>
    <property type="match status" value="1"/>
</dbReference>
<dbReference type="CDD" id="cd04322">
    <property type="entry name" value="LysRS_N"/>
    <property type="match status" value="1"/>
</dbReference>
<dbReference type="FunFam" id="2.40.50.140:FF:000024">
    <property type="entry name" value="Lysine--tRNA ligase"/>
    <property type="match status" value="1"/>
</dbReference>
<dbReference type="FunFam" id="3.30.930.10:FF:000001">
    <property type="entry name" value="Lysine--tRNA ligase"/>
    <property type="match status" value="1"/>
</dbReference>
<dbReference type="Gene3D" id="3.30.930.10">
    <property type="entry name" value="Bira Bifunctional Protein, Domain 2"/>
    <property type="match status" value="1"/>
</dbReference>
<dbReference type="Gene3D" id="2.40.50.140">
    <property type="entry name" value="Nucleic acid-binding proteins"/>
    <property type="match status" value="1"/>
</dbReference>
<dbReference type="HAMAP" id="MF_00252">
    <property type="entry name" value="Lys_tRNA_synth_class2"/>
    <property type="match status" value="1"/>
</dbReference>
<dbReference type="InterPro" id="IPR004364">
    <property type="entry name" value="Aa-tRNA-synt_II"/>
</dbReference>
<dbReference type="InterPro" id="IPR006195">
    <property type="entry name" value="aa-tRNA-synth_II"/>
</dbReference>
<dbReference type="InterPro" id="IPR045864">
    <property type="entry name" value="aa-tRNA-synth_II/BPL/LPL"/>
</dbReference>
<dbReference type="InterPro" id="IPR002313">
    <property type="entry name" value="Lys-tRNA-ligase_II"/>
</dbReference>
<dbReference type="InterPro" id="IPR044136">
    <property type="entry name" value="Lys-tRNA-ligase_II_N"/>
</dbReference>
<dbReference type="InterPro" id="IPR018149">
    <property type="entry name" value="Lys-tRNA-synth_II_C"/>
</dbReference>
<dbReference type="InterPro" id="IPR012340">
    <property type="entry name" value="NA-bd_OB-fold"/>
</dbReference>
<dbReference type="InterPro" id="IPR004365">
    <property type="entry name" value="NA-bd_OB_tRNA"/>
</dbReference>
<dbReference type="NCBIfam" id="TIGR00499">
    <property type="entry name" value="lysS_bact"/>
    <property type="match status" value="1"/>
</dbReference>
<dbReference type="NCBIfam" id="NF001756">
    <property type="entry name" value="PRK00484.1"/>
    <property type="match status" value="1"/>
</dbReference>
<dbReference type="PANTHER" id="PTHR42918:SF15">
    <property type="entry name" value="LYSINE--TRNA LIGASE, CHLOROPLASTIC_MITOCHONDRIAL"/>
    <property type="match status" value="1"/>
</dbReference>
<dbReference type="PANTHER" id="PTHR42918">
    <property type="entry name" value="LYSYL-TRNA SYNTHETASE"/>
    <property type="match status" value="1"/>
</dbReference>
<dbReference type="Pfam" id="PF00152">
    <property type="entry name" value="tRNA-synt_2"/>
    <property type="match status" value="1"/>
</dbReference>
<dbReference type="Pfam" id="PF01336">
    <property type="entry name" value="tRNA_anti-codon"/>
    <property type="match status" value="1"/>
</dbReference>
<dbReference type="PRINTS" id="PR00982">
    <property type="entry name" value="TRNASYNTHLYS"/>
</dbReference>
<dbReference type="SUPFAM" id="SSF55681">
    <property type="entry name" value="Class II aaRS and biotin synthetases"/>
    <property type="match status" value="1"/>
</dbReference>
<dbReference type="SUPFAM" id="SSF50249">
    <property type="entry name" value="Nucleic acid-binding proteins"/>
    <property type="match status" value="1"/>
</dbReference>
<dbReference type="PROSITE" id="PS50862">
    <property type="entry name" value="AA_TRNA_LIGASE_II"/>
    <property type="match status" value="1"/>
</dbReference>
<comment type="catalytic activity">
    <reaction evidence="1">
        <text>tRNA(Lys) + L-lysine + ATP = L-lysyl-tRNA(Lys) + AMP + diphosphate</text>
        <dbReference type="Rhea" id="RHEA:20792"/>
        <dbReference type="Rhea" id="RHEA-COMP:9696"/>
        <dbReference type="Rhea" id="RHEA-COMP:9697"/>
        <dbReference type="ChEBI" id="CHEBI:30616"/>
        <dbReference type="ChEBI" id="CHEBI:32551"/>
        <dbReference type="ChEBI" id="CHEBI:33019"/>
        <dbReference type="ChEBI" id="CHEBI:78442"/>
        <dbReference type="ChEBI" id="CHEBI:78529"/>
        <dbReference type="ChEBI" id="CHEBI:456215"/>
        <dbReference type="EC" id="6.1.1.6"/>
    </reaction>
</comment>
<comment type="cofactor">
    <cofactor evidence="1">
        <name>Mg(2+)</name>
        <dbReference type="ChEBI" id="CHEBI:18420"/>
    </cofactor>
    <text evidence="1">Binds 3 Mg(2+) ions per subunit.</text>
</comment>
<comment type="subunit">
    <text evidence="1">Homodimer.</text>
</comment>
<comment type="subcellular location">
    <subcellularLocation>
        <location evidence="1">Cytoplasm</location>
    </subcellularLocation>
</comment>
<comment type="similarity">
    <text evidence="1">Belongs to the class-II aminoacyl-tRNA synthetase family.</text>
</comment>
<feature type="chain" id="PRO_1000071871" description="Lysine--tRNA ligase">
    <location>
        <begin position="1"/>
        <end position="507"/>
    </location>
</feature>
<feature type="binding site" evidence="1">
    <location>
        <position position="416"/>
    </location>
    <ligand>
        <name>Mg(2+)</name>
        <dbReference type="ChEBI" id="CHEBI:18420"/>
        <label>1</label>
    </ligand>
</feature>
<feature type="binding site" evidence="1">
    <location>
        <position position="423"/>
    </location>
    <ligand>
        <name>Mg(2+)</name>
        <dbReference type="ChEBI" id="CHEBI:18420"/>
        <label>1</label>
    </ligand>
</feature>
<feature type="binding site" evidence="1">
    <location>
        <position position="423"/>
    </location>
    <ligand>
        <name>Mg(2+)</name>
        <dbReference type="ChEBI" id="CHEBI:18420"/>
        <label>2</label>
    </ligand>
</feature>